<reference key="1">
    <citation type="journal article" date="2000" name="Science">
        <title>Complete genome sequence of Neisseria meningitidis serogroup B strain MC58.</title>
        <authorList>
            <person name="Tettelin H."/>
            <person name="Saunders N.J."/>
            <person name="Heidelberg J.F."/>
            <person name="Jeffries A.C."/>
            <person name="Nelson K.E."/>
            <person name="Eisen J.A."/>
            <person name="Ketchum K.A."/>
            <person name="Hood D.W."/>
            <person name="Peden J.F."/>
            <person name="Dodson R.J."/>
            <person name="Nelson W.C."/>
            <person name="Gwinn M.L."/>
            <person name="DeBoy R.T."/>
            <person name="Peterson J.D."/>
            <person name="Hickey E.K."/>
            <person name="Haft D.H."/>
            <person name="Salzberg S.L."/>
            <person name="White O."/>
            <person name="Fleischmann R.D."/>
            <person name="Dougherty B.A."/>
            <person name="Mason T.M."/>
            <person name="Ciecko A."/>
            <person name="Parksey D.S."/>
            <person name="Blair E."/>
            <person name="Cittone H."/>
            <person name="Clark E.B."/>
            <person name="Cotton M.D."/>
            <person name="Utterback T.R."/>
            <person name="Khouri H.M."/>
            <person name="Qin H."/>
            <person name="Vamathevan J.J."/>
            <person name="Gill J."/>
            <person name="Scarlato V."/>
            <person name="Masignani V."/>
            <person name="Pizza M."/>
            <person name="Grandi G."/>
            <person name="Sun L."/>
            <person name="Smith H.O."/>
            <person name="Fraser C.M."/>
            <person name="Moxon E.R."/>
            <person name="Rappuoli R."/>
            <person name="Venter J.C."/>
        </authorList>
    </citation>
    <scope>NUCLEOTIDE SEQUENCE [LARGE SCALE GENOMIC DNA]</scope>
    <source>
        <strain>ATCC BAA-335 / MC58</strain>
    </source>
</reference>
<protein>
    <recommendedName>
        <fullName>1-acyl-sn-glycerol-3-phosphate acyltransferase</fullName>
        <shortName>1-AGP acyltransferase</shortName>
        <shortName>1-AGPAT</shortName>
        <ecNumber>2.3.1.51</ecNumber>
    </recommendedName>
    <alternativeName>
        <fullName>Lysophosphatidic acid acyltransferase</fullName>
        <shortName>LPAAT</shortName>
    </alternativeName>
</protein>
<comment type="function">
    <text evidence="1">Converts lysophosphatidic acid (LPA) into phosphatidic acid by incorporating acyl moiety at the 2 position.</text>
</comment>
<comment type="catalytic activity">
    <reaction>
        <text>a 1-acyl-sn-glycero-3-phosphate + an acyl-CoA = a 1,2-diacyl-sn-glycero-3-phosphate + CoA</text>
        <dbReference type="Rhea" id="RHEA:19709"/>
        <dbReference type="ChEBI" id="CHEBI:57287"/>
        <dbReference type="ChEBI" id="CHEBI:57970"/>
        <dbReference type="ChEBI" id="CHEBI:58342"/>
        <dbReference type="ChEBI" id="CHEBI:58608"/>
        <dbReference type="EC" id="2.3.1.51"/>
    </reaction>
</comment>
<comment type="pathway">
    <text>Phospholipid metabolism; CDP-diacylglycerol biosynthesis; CDP-diacylglycerol from sn-glycerol 3-phosphate: step 2/3.</text>
</comment>
<comment type="subcellular location">
    <subcellularLocation>
        <location evidence="1">Cell inner membrane</location>
        <topology evidence="1">Peripheral membrane protein</topology>
    </subcellularLocation>
</comment>
<comment type="domain">
    <text evidence="1">The HXXXXD motif is essential for acyltransferase activity and may constitute the binding site for the phosphate moiety of the glycerol-3-phosphate.</text>
</comment>
<comment type="similarity">
    <text evidence="2">Belongs to the 1-acyl-sn-glycerol-3-phosphate acyltransferase family.</text>
</comment>
<sequence>MSSNKASFFTRLRRLCRLAVWLFKTGKNLRGIDGGCPESRNRAVIELGRGVLAALDIGLEVGRPAPEHPNGVLVAANHVSWLDIFAMSAVYPSSFIAKQEIKSWPVLGKMGQNAGTVFINRNSRRDIEPINRAVCETLQRGQNVSFFPEARTSSGLGLLPFKAALFQSAIDAGAKVLAVALRYYDETGKRTARPSYADVGLPTCLWRIVSMKKLTIRVDFVCVADAAESEDRYALKDKIEESIRAVVADDADIAV</sequence>
<evidence type="ECO:0000250" key="1"/>
<evidence type="ECO:0000305" key="2"/>
<accession>Q9JZ47</accession>
<proteinExistence type="inferred from homology"/>
<keyword id="KW-0012">Acyltransferase</keyword>
<keyword id="KW-0997">Cell inner membrane</keyword>
<keyword id="KW-1003">Cell membrane</keyword>
<keyword id="KW-0444">Lipid biosynthesis</keyword>
<keyword id="KW-0443">Lipid metabolism</keyword>
<keyword id="KW-0472">Membrane</keyword>
<keyword id="KW-0594">Phospholipid biosynthesis</keyword>
<keyword id="KW-1208">Phospholipid metabolism</keyword>
<keyword id="KW-1185">Reference proteome</keyword>
<keyword id="KW-0808">Transferase</keyword>
<name>PLSC_NEIMB</name>
<dbReference type="EC" id="2.3.1.51"/>
<dbReference type="EMBL" id="AE002098">
    <property type="protein sequence ID" value="AAF41670.1"/>
    <property type="molecule type" value="Genomic_DNA"/>
</dbReference>
<dbReference type="PIR" id="A81099">
    <property type="entry name" value="A81099"/>
</dbReference>
<dbReference type="RefSeq" id="NP_274314.1">
    <property type="nucleotide sequence ID" value="NC_003112.2"/>
</dbReference>
<dbReference type="RefSeq" id="WP_002217072.1">
    <property type="nucleotide sequence ID" value="NC_003112.2"/>
</dbReference>
<dbReference type="SMR" id="Q9JZ47"/>
<dbReference type="FunCoup" id="Q9JZ47">
    <property type="interactions" value="283"/>
</dbReference>
<dbReference type="STRING" id="122586.NMB1294"/>
<dbReference type="PaxDb" id="122586-NMB1294"/>
<dbReference type="KEGG" id="nme:NMB1294"/>
<dbReference type="PATRIC" id="fig|122586.8.peg.1619"/>
<dbReference type="HOGENOM" id="CLU_027938_0_1_4"/>
<dbReference type="InParanoid" id="Q9JZ47"/>
<dbReference type="OrthoDB" id="9806880at2"/>
<dbReference type="UniPathway" id="UPA00557">
    <property type="reaction ID" value="UER00613"/>
</dbReference>
<dbReference type="Proteomes" id="UP000000425">
    <property type="component" value="Chromosome"/>
</dbReference>
<dbReference type="GO" id="GO:0005886">
    <property type="term" value="C:plasma membrane"/>
    <property type="evidence" value="ECO:0007669"/>
    <property type="project" value="UniProtKB-SubCell"/>
</dbReference>
<dbReference type="GO" id="GO:0003841">
    <property type="term" value="F:1-acylglycerol-3-phosphate O-acyltransferase activity"/>
    <property type="evidence" value="ECO:0000318"/>
    <property type="project" value="GO_Central"/>
</dbReference>
<dbReference type="GO" id="GO:0016024">
    <property type="term" value="P:CDP-diacylglycerol biosynthetic process"/>
    <property type="evidence" value="ECO:0007669"/>
    <property type="project" value="UniProtKB-UniPathway"/>
</dbReference>
<dbReference type="GO" id="GO:0006654">
    <property type="term" value="P:phosphatidic acid biosynthetic process"/>
    <property type="evidence" value="ECO:0000318"/>
    <property type="project" value="GO_Central"/>
</dbReference>
<dbReference type="CDD" id="cd07989">
    <property type="entry name" value="LPLAT_AGPAT-like"/>
    <property type="match status" value="1"/>
</dbReference>
<dbReference type="InterPro" id="IPR004552">
    <property type="entry name" value="AGP_acyltrans"/>
</dbReference>
<dbReference type="InterPro" id="IPR002123">
    <property type="entry name" value="Plipid/glycerol_acylTrfase"/>
</dbReference>
<dbReference type="NCBIfam" id="TIGR00530">
    <property type="entry name" value="AGP_acyltrn"/>
    <property type="match status" value="1"/>
</dbReference>
<dbReference type="PANTHER" id="PTHR10434">
    <property type="entry name" value="1-ACYL-SN-GLYCEROL-3-PHOSPHATE ACYLTRANSFERASE"/>
    <property type="match status" value="1"/>
</dbReference>
<dbReference type="PANTHER" id="PTHR10434:SF59">
    <property type="entry name" value="1-ACYL-SN-GLYCEROL-3-PHOSPHATE ACYLTRANSFERASE"/>
    <property type="match status" value="1"/>
</dbReference>
<dbReference type="Pfam" id="PF01553">
    <property type="entry name" value="Acyltransferase"/>
    <property type="match status" value="1"/>
</dbReference>
<dbReference type="SMART" id="SM00563">
    <property type="entry name" value="PlsC"/>
    <property type="match status" value="1"/>
</dbReference>
<dbReference type="SUPFAM" id="SSF69593">
    <property type="entry name" value="Glycerol-3-phosphate (1)-acyltransferase"/>
    <property type="match status" value="1"/>
</dbReference>
<feature type="chain" id="PRO_0000208176" description="1-acyl-sn-glycerol-3-phosphate acyltransferase">
    <location>
        <begin position="1"/>
        <end position="255"/>
    </location>
</feature>
<feature type="short sequence motif" description="HXXXXD motif">
    <location>
        <begin position="78"/>
        <end position="83"/>
    </location>
</feature>
<organism>
    <name type="scientific">Neisseria meningitidis serogroup B (strain ATCC BAA-335 / MC58)</name>
    <dbReference type="NCBI Taxonomy" id="122586"/>
    <lineage>
        <taxon>Bacteria</taxon>
        <taxon>Pseudomonadati</taxon>
        <taxon>Pseudomonadota</taxon>
        <taxon>Betaproteobacteria</taxon>
        <taxon>Neisseriales</taxon>
        <taxon>Neisseriaceae</taxon>
        <taxon>Neisseria</taxon>
    </lineage>
</organism>
<gene>
    <name type="primary">plsC</name>
    <name type="ordered locus">NMB1294</name>
</gene>